<organism>
    <name type="scientific">Acinetobacter baylyi (strain ATCC 33305 / BD413 / ADP1)</name>
    <dbReference type="NCBI Taxonomy" id="62977"/>
    <lineage>
        <taxon>Bacteria</taxon>
        <taxon>Pseudomonadati</taxon>
        <taxon>Pseudomonadota</taxon>
        <taxon>Gammaproteobacteria</taxon>
        <taxon>Moraxellales</taxon>
        <taxon>Moraxellaceae</taxon>
        <taxon>Acinetobacter</taxon>
    </lineage>
</organism>
<comment type="function">
    <text evidence="1">Catalyzes the phosphorylation of the 3'-hydroxyl group of dephosphocoenzyme A to form coenzyme A.</text>
</comment>
<comment type="catalytic activity">
    <reaction evidence="1">
        <text>3'-dephospho-CoA + ATP = ADP + CoA + H(+)</text>
        <dbReference type="Rhea" id="RHEA:18245"/>
        <dbReference type="ChEBI" id="CHEBI:15378"/>
        <dbReference type="ChEBI" id="CHEBI:30616"/>
        <dbReference type="ChEBI" id="CHEBI:57287"/>
        <dbReference type="ChEBI" id="CHEBI:57328"/>
        <dbReference type="ChEBI" id="CHEBI:456216"/>
        <dbReference type="EC" id="2.7.1.24"/>
    </reaction>
</comment>
<comment type="pathway">
    <text evidence="1">Cofactor biosynthesis; coenzyme A biosynthesis; CoA from (R)-pantothenate: step 5/5.</text>
</comment>
<comment type="subcellular location">
    <subcellularLocation>
        <location evidence="1">Cytoplasm</location>
    </subcellularLocation>
</comment>
<comment type="similarity">
    <text evidence="1">Belongs to the CoaE family.</text>
</comment>
<accession>Q6FF48</accession>
<sequence length="195" mass="21770">MFIVGLTGGIGSGKSAASQWFEKQGIQVVDADIVAREVVDVGQPALKEIATAFGDWVLQADGSLNRRALREHIFQSPESRHTLEAITHPIIRKSIIEQLNAATSPYVILVSPLLFETNQHELTDRNLLIDASEEIQIARASQRDGQSIQQIQKIIAAQMPRAEKQQRADDIVLNDGHLKHLYQQLIALHENYLNH</sequence>
<gene>
    <name evidence="1" type="primary">coaE</name>
    <name type="ordered locus">ACIAD0359</name>
</gene>
<evidence type="ECO:0000255" key="1">
    <source>
        <dbReference type="HAMAP-Rule" id="MF_00376"/>
    </source>
</evidence>
<proteinExistence type="inferred from homology"/>
<reference key="1">
    <citation type="journal article" date="2004" name="Nucleic Acids Res.">
        <title>Unique features revealed by the genome sequence of Acinetobacter sp. ADP1, a versatile and naturally transformation competent bacterium.</title>
        <authorList>
            <person name="Barbe V."/>
            <person name="Vallenet D."/>
            <person name="Fonknechten N."/>
            <person name="Kreimeyer A."/>
            <person name="Oztas S."/>
            <person name="Labarre L."/>
            <person name="Cruveiller S."/>
            <person name="Robert C."/>
            <person name="Duprat S."/>
            <person name="Wincker P."/>
            <person name="Ornston L.N."/>
            <person name="Weissenbach J."/>
            <person name="Marliere P."/>
            <person name="Cohen G.N."/>
            <person name="Medigue C."/>
        </authorList>
    </citation>
    <scope>NUCLEOTIDE SEQUENCE [LARGE SCALE GENOMIC DNA]</scope>
    <source>
        <strain>ATCC 33305 / BD413 / ADP1</strain>
    </source>
</reference>
<dbReference type="EC" id="2.7.1.24" evidence="1"/>
<dbReference type="EMBL" id="CR543861">
    <property type="protein sequence ID" value="CAG67309.1"/>
    <property type="molecule type" value="Genomic_DNA"/>
</dbReference>
<dbReference type="SMR" id="Q6FF48"/>
<dbReference type="STRING" id="202950.GCA_001485005_00621"/>
<dbReference type="KEGG" id="aci:ACIAD0359"/>
<dbReference type="eggNOG" id="COG0237">
    <property type="taxonomic scope" value="Bacteria"/>
</dbReference>
<dbReference type="HOGENOM" id="CLU_057180_1_2_6"/>
<dbReference type="UniPathway" id="UPA00241">
    <property type="reaction ID" value="UER00356"/>
</dbReference>
<dbReference type="Proteomes" id="UP000000430">
    <property type="component" value="Chromosome"/>
</dbReference>
<dbReference type="GO" id="GO:0005737">
    <property type="term" value="C:cytoplasm"/>
    <property type="evidence" value="ECO:0007669"/>
    <property type="project" value="UniProtKB-SubCell"/>
</dbReference>
<dbReference type="GO" id="GO:0005524">
    <property type="term" value="F:ATP binding"/>
    <property type="evidence" value="ECO:0007669"/>
    <property type="project" value="UniProtKB-UniRule"/>
</dbReference>
<dbReference type="GO" id="GO:0004140">
    <property type="term" value="F:dephospho-CoA kinase activity"/>
    <property type="evidence" value="ECO:0007669"/>
    <property type="project" value="UniProtKB-UniRule"/>
</dbReference>
<dbReference type="GO" id="GO:0015937">
    <property type="term" value="P:coenzyme A biosynthetic process"/>
    <property type="evidence" value="ECO:0007669"/>
    <property type="project" value="UniProtKB-UniRule"/>
</dbReference>
<dbReference type="CDD" id="cd02022">
    <property type="entry name" value="DPCK"/>
    <property type="match status" value="1"/>
</dbReference>
<dbReference type="Gene3D" id="3.40.50.300">
    <property type="entry name" value="P-loop containing nucleotide triphosphate hydrolases"/>
    <property type="match status" value="1"/>
</dbReference>
<dbReference type="HAMAP" id="MF_00376">
    <property type="entry name" value="Dephospho_CoA_kinase"/>
    <property type="match status" value="1"/>
</dbReference>
<dbReference type="InterPro" id="IPR001977">
    <property type="entry name" value="Depp_CoAkinase"/>
</dbReference>
<dbReference type="InterPro" id="IPR027417">
    <property type="entry name" value="P-loop_NTPase"/>
</dbReference>
<dbReference type="NCBIfam" id="TIGR00152">
    <property type="entry name" value="dephospho-CoA kinase"/>
    <property type="match status" value="1"/>
</dbReference>
<dbReference type="PANTHER" id="PTHR10695:SF46">
    <property type="entry name" value="BIFUNCTIONAL COENZYME A SYNTHASE-RELATED"/>
    <property type="match status" value="1"/>
</dbReference>
<dbReference type="PANTHER" id="PTHR10695">
    <property type="entry name" value="DEPHOSPHO-COA KINASE-RELATED"/>
    <property type="match status" value="1"/>
</dbReference>
<dbReference type="Pfam" id="PF01121">
    <property type="entry name" value="CoaE"/>
    <property type="match status" value="1"/>
</dbReference>
<dbReference type="SUPFAM" id="SSF52540">
    <property type="entry name" value="P-loop containing nucleoside triphosphate hydrolases"/>
    <property type="match status" value="1"/>
</dbReference>
<dbReference type="PROSITE" id="PS51219">
    <property type="entry name" value="DPCK"/>
    <property type="match status" value="1"/>
</dbReference>
<feature type="chain" id="PRO_0000172895" description="Dephospho-CoA kinase">
    <location>
        <begin position="1"/>
        <end position="195"/>
    </location>
</feature>
<feature type="domain" description="DPCK" evidence="1">
    <location>
        <begin position="3"/>
        <end position="195"/>
    </location>
</feature>
<feature type="binding site" evidence="1">
    <location>
        <begin position="11"/>
        <end position="16"/>
    </location>
    <ligand>
        <name>ATP</name>
        <dbReference type="ChEBI" id="CHEBI:30616"/>
    </ligand>
</feature>
<protein>
    <recommendedName>
        <fullName evidence="1">Dephospho-CoA kinase</fullName>
        <ecNumber evidence="1">2.7.1.24</ecNumber>
    </recommendedName>
    <alternativeName>
        <fullName evidence="1">Dephosphocoenzyme A kinase</fullName>
    </alternativeName>
</protein>
<name>COAE_ACIAD</name>
<keyword id="KW-0067">ATP-binding</keyword>
<keyword id="KW-0173">Coenzyme A biosynthesis</keyword>
<keyword id="KW-0963">Cytoplasm</keyword>
<keyword id="KW-0418">Kinase</keyword>
<keyword id="KW-0547">Nucleotide-binding</keyword>
<keyword id="KW-0808">Transferase</keyword>